<evidence type="ECO:0000255" key="1">
    <source>
        <dbReference type="HAMAP-Rule" id="MF_00111"/>
    </source>
</evidence>
<dbReference type="EC" id="2.5.1.7" evidence="1"/>
<dbReference type="EMBL" id="CP000009">
    <property type="protein sequence ID" value="AAW60624.1"/>
    <property type="molecule type" value="Genomic_DNA"/>
</dbReference>
<dbReference type="RefSeq" id="WP_011252420.1">
    <property type="nucleotide sequence ID" value="NZ_LT900338.1"/>
</dbReference>
<dbReference type="SMR" id="Q5FSM2"/>
<dbReference type="STRING" id="290633.GOX0850"/>
<dbReference type="KEGG" id="gox:GOX0850"/>
<dbReference type="eggNOG" id="COG0766">
    <property type="taxonomic scope" value="Bacteria"/>
</dbReference>
<dbReference type="HOGENOM" id="CLU_027387_0_0_5"/>
<dbReference type="UniPathway" id="UPA00219"/>
<dbReference type="Proteomes" id="UP000006375">
    <property type="component" value="Chromosome"/>
</dbReference>
<dbReference type="GO" id="GO:0005737">
    <property type="term" value="C:cytoplasm"/>
    <property type="evidence" value="ECO:0007669"/>
    <property type="project" value="UniProtKB-SubCell"/>
</dbReference>
<dbReference type="GO" id="GO:0008760">
    <property type="term" value="F:UDP-N-acetylglucosamine 1-carboxyvinyltransferase activity"/>
    <property type="evidence" value="ECO:0007669"/>
    <property type="project" value="UniProtKB-UniRule"/>
</dbReference>
<dbReference type="GO" id="GO:0051301">
    <property type="term" value="P:cell division"/>
    <property type="evidence" value="ECO:0007669"/>
    <property type="project" value="UniProtKB-KW"/>
</dbReference>
<dbReference type="GO" id="GO:0071555">
    <property type="term" value="P:cell wall organization"/>
    <property type="evidence" value="ECO:0007669"/>
    <property type="project" value="UniProtKB-KW"/>
</dbReference>
<dbReference type="GO" id="GO:0009252">
    <property type="term" value="P:peptidoglycan biosynthetic process"/>
    <property type="evidence" value="ECO:0007669"/>
    <property type="project" value="UniProtKB-UniRule"/>
</dbReference>
<dbReference type="GO" id="GO:0008360">
    <property type="term" value="P:regulation of cell shape"/>
    <property type="evidence" value="ECO:0007669"/>
    <property type="project" value="UniProtKB-KW"/>
</dbReference>
<dbReference type="GO" id="GO:0019277">
    <property type="term" value="P:UDP-N-acetylgalactosamine biosynthetic process"/>
    <property type="evidence" value="ECO:0007669"/>
    <property type="project" value="InterPro"/>
</dbReference>
<dbReference type="CDD" id="cd01555">
    <property type="entry name" value="UdpNAET"/>
    <property type="match status" value="1"/>
</dbReference>
<dbReference type="FunFam" id="3.65.10.10:FF:000001">
    <property type="entry name" value="UDP-N-acetylglucosamine 1-carboxyvinyltransferase"/>
    <property type="match status" value="1"/>
</dbReference>
<dbReference type="Gene3D" id="3.65.10.10">
    <property type="entry name" value="Enolpyruvate transferase domain"/>
    <property type="match status" value="2"/>
</dbReference>
<dbReference type="HAMAP" id="MF_00111">
    <property type="entry name" value="MurA"/>
    <property type="match status" value="1"/>
</dbReference>
<dbReference type="InterPro" id="IPR001986">
    <property type="entry name" value="Enolpyruvate_Tfrase_dom"/>
</dbReference>
<dbReference type="InterPro" id="IPR036968">
    <property type="entry name" value="Enolpyruvate_Tfrase_sf"/>
</dbReference>
<dbReference type="InterPro" id="IPR050068">
    <property type="entry name" value="MurA_subfamily"/>
</dbReference>
<dbReference type="InterPro" id="IPR013792">
    <property type="entry name" value="RNA3'P_cycl/enolpyr_Trfase_a/b"/>
</dbReference>
<dbReference type="InterPro" id="IPR005750">
    <property type="entry name" value="UDP_GlcNAc_COvinyl_MurA"/>
</dbReference>
<dbReference type="NCBIfam" id="TIGR01072">
    <property type="entry name" value="murA"/>
    <property type="match status" value="1"/>
</dbReference>
<dbReference type="NCBIfam" id="NF006873">
    <property type="entry name" value="PRK09369.1"/>
    <property type="match status" value="1"/>
</dbReference>
<dbReference type="PANTHER" id="PTHR43783">
    <property type="entry name" value="UDP-N-ACETYLGLUCOSAMINE 1-CARBOXYVINYLTRANSFERASE"/>
    <property type="match status" value="1"/>
</dbReference>
<dbReference type="PANTHER" id="PTHR43783:SF1">
    <property type="entry name" value="UDP-N-ACETYLGLUCOSAMINE 1-CARBOXYVINYLTRANSFERASE"/>
    <property type="match status" value="1"/>
</dbReference>
<dbReference type="Pfam" id="PF00275">
    <property type="entry name" value="EPSP_synthase"/>
    <property type="match status" value="1"/>
</dbReference>
<dbReference type="SUPFAM" id="SSF55205">
    <property type="entry name" value="EPT/RTPC-like"/>
    <property type="match status" value="1"/>
</dbReference>
<comment type="function">
    <text evidence="1">Cell wall formation. Adds enolpyruvyl to UDP-N-acetylglucosamine.</text>
</comment>
<comment type="catalytic activity">
    <reaction evidence="1">
        <text>phosphoenolpyruvate + UDP-N-acetyl-alpha-D-glucosamine = UDP-N-acetyl-3-O-(1-carboxyvinyl)-alpha-D-glucosamine + phosphate</text>
        <dbReference type="Rhea" id="RHEA:18681"/>
        <dbReference type="ChEBI" id="CHEBI:43474"/>
        <dbReference type="ChEBI" id="CHEBI:57705"/>
        <dbReference type="ChEBI" id="CHEBI:58702"/>
        <dbReference type="ChEBI" id="CHEBI:68483"/>
        <dbReference type="EC" id="2.5.1.7"/>
    </reaction>
</comment>
<comment type="pathway">
    <text evidence="1">Cell wall biogenesis; peptidoglycan biosynthesis.</text>
</comment>
<comment type="subcellular location">
    <subcellularLocation>
        <location evidence="1">Cytoplasm</location>
    </subcellularLocation>
</comment>
<comment type="similarity">
    <text evidence="1">Belongs to the EPSP synthase family. MurA subfamily.</text>
</comment>
<accession>Q5FSM2</accession>
<feature type="chain" id="PRO_0000231210" description="UDP-N-acetylglucosamine 1-carboxyvinyltransferase">
    <location>
        <begin position="1"/>
        <end position="418"/>
    </location>
</feature>
<feature type="active site" description="Proton donor" evidence="1">
    <location>
        <position position="116"/>
    </location>
</feature>
<feature type="binding site" evidence="1">
    <location>
        <begin position="22"/>
        <end position="23"/>
    </location>
    <ligand>
        <name>phosphoenolpyruvate</name>
        <dbReference type="ChEBI" id="CHEBI:58702"/>
    </ligand>
</feature>
<feature type="binding site" evidence="1">
    <location>
        <position position="92"/>
    </location>
    <ligand>
        <name>UDP-N-acetyl-alpha-D-glucosamine</name>
        <dbReference type="ChEBI" id="CHEBI:57705"/>
    </ligand>
</feature>
<feature type="binding site" evidence="1">
    <location>
        <position position="305"/>
    </location>
    <ligand>
        <name>UDP-N-acetyl-alpha-D-glucosamine</name>
        <dbReference type="ChEBI" id="CHEBI:57705"/>
    </ligand>
</feature>
<feature type="binding site" evidence="1">
    <location>
        <position position="327"/>
    </location>
    <ligand>
        <name>UDP-N-acetyl-alpha-D-glucosamine</name>
        <dbReference type="ChEBI" id="CHEBI:57705"/>
    </ligand>
</feature>
<feature type="modified residue" description="2-(S-cysteinyl)pyruvic acid O-phosphothioketal" evidence="1">
    <location>
        <position position="116"/>
    </location>
</feature>
<sequence>MDRFIIRGGRRLTGEIEIGGAKNSGLKLMVAGLLTSERLVLSNVPAIADIKTMRDLLVGLGITVEDAGPRTLSIGGEIGSVEAPYDIVSKMRASILVLGPLLARAREAKVSLPGGCAIGTRPVDMHLKGLETLGAEIRLENGYINATAPDGLKGDRIILPFASVGATENLLMAATLAKGRTHIVNAAREPEISDLVHCLNAMGAQITGEGSGTLVIDGVEKLHGAHYAVMPDRIECGTYACAAGITGGDLLLVGGRADDLGAVIRTLEETGVEVLEEERGLRVRRSGTLQGVDIMTEPYPGFPTDMQAQFMAMLSVAEGASMITETIFENRFMHVPELNRMGARVNVHGRSAIIRGVPKLSGAPVMATDLRASFSLILAGLAAEGETQLSRIYHLDRGYEGVDRKLAACGADIARVSD</sequence>
<name>MURA_GLUOX</name>
<keyword id="KW-0131">Cell cycle</keyword>
<keyword id="KW-0132">Cell division</keyword>
<keyword id="KW-0133">Cell shape</keyword>
<keyword id="KW-0961">Cell wall biogenesis/degradation</keyword>
<keyword id="KW-0963">Cytoplasm</keyword>
<keyword id="KW-0573">Peptidoglycan synthesis</keyword>
<keyword id="KW-0670">Pyruvate</keyword>
<keyword id="KW-1185">Reference proteome</keyword>
<keyword id="KW-0808">Transferase</keyword>
<gene>
    <name evidence="1" type="primary">murA</name>
    <name type="ordered locus">GOX0850</name>
</gene>
<reference key="1">
    <citation type="journal article" date="2005" name="Nat. Biotechnol.">
        <title>Complete genome sequence of the acetic acid bacterium Gluconobacter oxydans.</title>
        <authorList>
            <person name="Prust C."/>
            <person name="Hoffmeister M."/>
            <person name="Liesegang H."/>
            <person name="Wiezer A."/>
            <person name="Fricke W.F."/>
            <person name="Ehrenreich A."/>
            <person name="Gottschalk G."/>
            <person name="Deppenmeier U."/>
        </authorList>
    </citation>
    <scope>NUCLEOTIDE SEQUENCE [LARGE SCALE GENOMIC DNA]</scope>
    <source>
        <strain>621H</strain>
    </source>
</reference>
<protein>
    <recommendedName>
        <fullName evidence="1">UDP-N-acetylglucosamine 1-carboxyvinyltransferase</fullName>
        <ecNumber evidence="1">2.5.1.7</ecNumber>
    </recommendedName>
    <alternativeName>
        <fullName evidence="1">Enoylpyruvate transferase</fullName>
    </alternativeName>
    <alternativeName>
        <fullName evidence="1">UDP-N-acetylglucosamine enolpyruvyl transferase</fullName>
        <shortName evidence="1">EPT</shortName>
    </alternativeName>
</protein>
<organism>
    <name type="scientific">Gluconobacter oxydans (strain 621H)</name>
    <name type="common">Gluconobacter suboxydans</name>
    <dbReference type="NCBI Taxonomy" id="290633"/>
    <lineage>
        <taxon>Bacteria</taxon>
        <taxon>Pseudomonadati</taxon>
        <taxon>Pseudomonadota</taxon>
        <taxon>Alphaproteobacteria</taxon>
        <taxon>Acetobacterales</taxon>
        <taxon>Acetobacteraceae</taxon>
        <taxon>Gluconobacter</taxon>
    </lineage>
</organism>
<proteinExistence type="inferred from homology"/>